<comment type="function">
    <text evidence="3">May operate as a co-chaperone of the male germ cell- and haploid stage-specific Hsp70 proteins.</text>
</comment>
<comment type="tissue specificity">
    <text evidence="2">Expressed in sperm (at protein level).</text>
</comment>
<comment type="caution">
    <text evidence="3">Due to a premature stop codon, the human protein is truncated and lacks the DNAJB3 canonical C-terminal domain. However, expression studies suggest the existence of the mRNA and protein in human.</text>
</comment>
<feature type="chain" id="PRO_0000386472" description="DnaJ homolog subfamily B member 3">
    <location>
        <begin position="1"/>
        <end position="145"/>
    </location>
</feature>
<feature type="domain" description="J" evidence="1">
    <location>
        <begin position="1"/>
        <end position="69"/>
    </location>
</feature>
<feature type="sequence variant" id="VAR_061142" description="In dbSNP:rs34622615.">
    <original>D</original>
    <variation>E</variation>
    <location>
        <position position="85"/>
    </location>
</feature>
<feature type="sequence variant" id="VAR_061143" description="In dbSNP:rs34150486.">
    <original>D</original>
    <variation>E</variation>
    <location>
        <position position="98"/>
    </location>
</feature>
<feature type="helix" evidence="4">
    <location>
        <begin position="4"/>
        <end position="7"/>
    </location>
</feature>
<feature type="helix" evidence="4">
    <location>
        <begin position="16"/>
        <end position="27"/>
    </location>
</feature>
<feature type="turn" evidence="4">
    <location>
        <begin position="32"/>
        <end position="34"/>
    </location>
</feature>
<feature type="helix" evidence="4">
    <location>
        <begin position="39"/>
        <end position="56"/>
    </location>
</feature>
<feature type="helix" evidence="4">
    <location>
        <begin position="61"/>
        <end position="67"/>
    </location>
</feature>
<organism>
    <name type="scientific">Homo sapiens</name>
    <name type="common">Human</name>
    <dbReference type="NCBI Taxonomy" id="9606"/>
    <lineage>
        <taxon>Eukaryota</taxon>
        <taxon>Metazoa</taxon>
        <taxon>Chordata</taxon>
        <taxon>Craniata</taxon>
        <taxon>Vertebrata</taxon>
        <taxon>Euteleostomi</taxon>
        <taxon>Mammalia</taxon>
        <taxon>Eutheria</taxon>
        <taxon>Euarchontoglires</taxon>
        <taxon>Primates</taxon>
        <taxon>Haplorrhini</taxon>
        <taxon>Catarrhini</taxon>
        <taxon>Hominidae</taxon>
        <taxon>Homo</taxon>
    </lineage>
</organism>
<accession>Q8WWF6</accession>
<name>DNJB3_HUMAN</name>
<reference key="1">
    <citation type="submission" date="2002-03" db="EMBL/GenBank/DDBJ databases">
        <title>Cloning and identification of genes which are differentially expressed in hepatocellular carcinoma.</title>
        <authorList>
            <person name="Xueyuan D."/>
            <person name="Weifeng C."/>
        </authorList>
    </citation>
    <scope>NUCLEOTIDE SEQUENCE [MRNA]</scope>
    <source>
        <tissue>Hepatoma</tissue>
    </source>
</reference>
<reference key="2">
    <citation type="journal article" date="2005" name="Nature">
        <title>Generation and annotation of the DNA sequences of human chromosomes 2 and 4.</title>
        <authorList>
            <person name="Hillier L.W."/>
            <person name="Graves T.A."/>
            <person name="Fulton R.S."/>
            <person name="Fulton L.A."/>
            <person name="Pepin K.H."/>
            <person name="Minx P."/>
            <person name="Wagner-McPherson C."/>
            <person name="Layman D."/>
            <person name="Wylie K."/>
            <person name="Sekhon M."/>
            <person name="Becker M.C."/>
            <person name="Fewell G.A."/>
            <person name="Delehaunty K.D."/>
            <person name="Miner T.L."/>
            <person name="Nash W.E."/>
            <person name="Kremitzki C."/>
            <person name="Oddy L."/>
            <person name="Du H."/>
            <person name="Sun H."/>
            <person name="Bradshaw-Cordum H."/>
            <person name="Ali J."/>
            <person name="Carter J."/>
            <person name="Cordes M."/>
            <person name="Harris A."/>
            <person name="Isak A."/>
            <person name="van Brunt A."/>
            <person name="Nguyen C."/>
            <person name="Du F."/>
            <person name="Courtney L."/>
            <person name="Kalicki J."/>
            <person name="Ozersky P."/>
            <person name="Abbott S."/>
            <person name="Armstrong J."/>
            <person name="Belter E.A."/>
            <person name="Caruso L."/>
            <person name="Cedroni M."/>
            <person name="Cotton M."/>
            <person name="Davidson T."/>
            <person name="Desai A."/>
            <person name="Elliott G."/>
            <person name="Erb T."/>
            <person name="Fronick C."/>
            <person name="Gaige T."/>
            <person name="Haakenson W."/>
            <person name="Haglund K."/>
            <person name="Holmes A."/>
            <person name="Harkins R."/>
            <person name="Kim K."/>
            <person name="Kruchowski S.S."/>
            <person name="Strong C.M."/>
            <person name="Grewal N."/>
            <person name="Goyea E."/>
            <person name="Hou S."/>
            <person name="Levy A."/>
            <person name="Martinka S."/>
            <person name="Mead K."/>
            <person name="McLellan M.D."/>
            <person name="Meyer R."/>
            <person name="Randall-Maher J."/>
            <person name="Tomlinson C."/>
            <person name="Dauphin-Kohlberg S."/>
            <person name="Kozlowicz-Reilly A."/>
            <person name="Shah N."/>
            <person name="Swearengen-Shahid S."/>
            <person name="Snider J."/>
            <person name="Strong J.T."/>
            <person name="Thompson J."/>
            <person name="Yoakum M."/>
            <person name="Leonard S."/>
            <person name="Pearman C."/>
            <person name="Trani L."/>
            <person name="Radionenko M."/>
            <person name="Waligorski J.E."/>
            <person name="Wang C."/>
            <person name="Rock S.M."/>
            <person name="Tin-Wollam A.-M."/>
            <person name="Maupin R."/>
            <person name="Latreille P."/>
            <person name="Wendl M.C."/>
            <person name="Yang S.-P."/>
            <person name="Pohl C."/>
            <person name="Wallis J.W."/>
            <person name="Spieth J."/>
            <person name="Bieri T.A."/>
            <person name="Berkowicz N."/>
            <person name="Nelson J.O."/>
            <person name="Osborne J."/>
            <person name="Ding L."/>
            <person name="Meyer R."/>
            <person name="Sabo A."/>
            <person name="Shotland Y."/>
            <person name="Sinha P."/>
            <person name="Wohldmann P.E."/>
            <person name="Cook L.L."/>
            <person name="Hickenbotham M.T."/>
            <person name="Eldred J."/>
            <person name="Williams D."/>
            <person name="Jones T.A."/>
            <person name="She X."/>
            <person name="Ciccarelli F.D."/>
            <person name="Izaurralde E."/>
            <person name="Taylor J."/>
            <person name="Schmutz J."/>
            <person name="Myers R.M."/>
            <person name="Cox D.R."/>
            <person name="Huang X."/>
            <person name="McPherson J.D."/>
            <person name="Mardis E.R."/>
            <person name="Clifton S.W."/>
            <person name="Warren W.C."/>
            <person name="Chinwalla A.T."/>
            <person name="Eddy S.R."/>
            <person name="Marra M.A."/>
            <person name="Ovcharenko I."/>
            <person name="Furey T.S."/>
            <person name="Miller W."/>
            <person name="Eichler E.E."/>
            <person name="Bork P."/>
            <person name="Suyama M."/>
            <person name="Torrents D."/>
            <person name="Waterston R.H."/>
            <person name="Wilson R.K."/>
        </authorList>
    </citation>
    <scope>NUCLEOTIDE SEQUENCE [LARGE SCALE GENOMIC DNA]</scope>
</reference>
<reference key="3">
    <citation type="journal article" date="2004" name="Genome Res.">
        <title>The status, quality, and expansion of the NIH full-length cDNA project: the Mammalian Gene Collection (MGC).</title>
        <authorList>
            <consortium name="The MGC Project Team"/>
        </authorList>
    </citation>
    <scope>NUCLEOTIDE SEQUENCE [LARGE SCALE MRNA]</scope>
    <source>
        <tissue>Testis</tissue>
    </source>
</reference>
<reference key="4">
    <citation type="journal article" date="2008" name="Gen. Comp. Endocrinol.">
        <title>Structure of msj-1 gene in mice and humans: a possible role in the regulation of male reproduction.</title>
        <authorList>
            <person name="Meccariello R."/>
            <person name="Berruti G."/>
            <person name="Chianese R."/>
            <person name="De Santis R."/>
            <person name="Di Cunto F."/>
            <person name="Scarpa D."/>
            <person name="Cobellis G."/>
            <person name="Zucchetti I."/>
            <person name="Pierantoni R."/>
            <person name="Altruda F."/>
            <person name="Fasano S."/>
        </authorList>
    </citation>
    <scope>TISSUE SPECIFICITY</scope>
</reference>
<reference key="5">
    <citation type="submission" date="2009-02" db="PDB data bank">
        <title>Solution structure of the DNAj domain of the human protein hcg3, a hypothetical protein tmp_locus_21.</title>
        <authorList>
            <consortium name="RIKEN structural genomics initiative (RSGI)"/>
        </authorList>
    </citation>
    <scope>STRUCTURE BY NMR OF 1-69</scope>
</reference>
<keyword id="KW-0002">3D-structure</keyword>
<keyword id="KW-0143">Chaperone</keyword>
<keyword id="KW-1267">Proteomics identification</keyword>
<keyword id="KW-1185">Reference proteome</keyword>
<protein>
    <recommendedName>
        <fullName>DnaJ homolog subfamily B member 3</fullName>
    </recommendedName>
</protein>
<gene>
    <name type="primary">DNAJB3</name>
    <name type="synonym">HCG3</name>
</gene>
<sequence length="145" mass="16559">MVDYYEVLDVPRQASSEAIKKAYRKLALKWHPDKNPENKEEAERRFKQVAEAYEVLSDAKKRDIYDRYGEAGAEGGCTGGRPFEDPFEYVFSFRDPADVFREFFGGQDPFSFDLLGNPLENILGGSEELLGKQKQSVCTPFLCLQ</sequence>
<evidence type="ECO:0000255" key="1">
    <source>
        <dbReference type="PROSITE-ProRule" id="PRU00286"/>
    </source>
</evidence>
<evidence type="ECO:0000269" key="2">
    <source>
    </source>
</evidence>
<evidence type="ECO:0000305" key="3"/>
<evidence type="ECO:0007829" key="4">
    <source>
        <dbReference type="PDB" id="2EJ7"/>
    </source>
</evidence>
<dbReference type="EMBL" id="AY083665">
    <property type="protein sequence ID" value="AAM08934.1"/>
    <property type="molecule type" value="mRNA"/>
</dbReference>
<dbReference type="EMBL" id="AC114812">
    <property type="protein sequence ID" value="AAY24024.1"/>
    <property type="molecule type" value="Genomic_DNA"/>
</dbReference>
<dbReference type="EMBL" id="BC017590">
    <property type="protein sequence ID" value="AAH17590.1"/>
    <property type="molecule type" value="mRNA"/>
</dbReference>
<dbReference type="EMBL" id="BC024013">
    <property type="protein sequence ID" value="AAH24013.1"/>
    <property type="molecule type" value="mRNA"/>
</dbReference>
<dbReference type="RefSeq" id="NP_001001394.1">
    <property type="nucleotide sequence ID" value="NM_001001394.3"/>
</dbReference>
<dbReference type="PDB" id="2EJ7">
    <property type="method" value="NMR"/>
    <property type="chains" value="A=1-69"/>
</dbReference>
<dbReference type="PDBsum" id="2EJ7"/>
<dbReference type="SMR" id="Q8WWF6"/>
<dbReference type="BioGRID" id="135928">
    <property type="interactions" value="61"/>
</dbReference>
<dbReference type="FunCoup" id="Q8WWF6">
    <property type="interactions" value="183"/>
</dbReference>
<dbReference type="IntAct" id="Q8WWF6">
    <property type="interactions" value="33"/>
</dbReference>
<dbReference type="iPTMnet" id="Q8WWF6"/>
<dbReference type="PhosphoSitePlus" id="Q8WWF6"/>
<dbReference type="BioMuta" id="HGNC:32397"/>
<dbReference type="DMDM" id="74730976"/>
<dbReference type="jPOST" id="Q8WWF6"/>
<dbReference type="MassIVE" id="Q8WWF6"/>
<dbReference type="PeptideAtlas" id="Q8WWF6"/>
<dbReference type="ProteomicsDB" id="74882"/>
<dbReference type="DNASU" id="414061"/>
<dbReference type="GeneID" id="414061"/>
<dbReference type="AGR" id="HGNC:32397"/>
<dbReference type="CTD" id="414061"/>
<dbReference type="DisGeNET" id="414061"/>
<dbReference type="GeneCards" id="DNAJB3"/>
<dbReference type="HGNC" id="HGNC:32397">
    <property type="gene designation" value="DNAJB3"/>
</dbReference>
<dbReference type="neXtProt" id="NX_Q8WWF6"/>
<dbReference type="PharmGKB" id="PA162383828"/>
<dbReference type="InParanoid" id="Q8WWF6"/>
<dbReference type="PAN-GO" id="Q8WWF6">
    <property type="GO annotations" value="6 GO annotations based on evolutionary models"/>
</dbReference>
<dbReference type="PhylomeDB" id="Q8WWF6"/>
<dbReference type="PathwayCommons" id="Q8WWF6"/>
<dbReference type="SignaLink" id="Q8WWF6"/>
<dbReference type="BioGRID-ORCS" id="414061">
    <property type="hits" value="6 hits in 242 CRISPR screens"/>
</dbReference>
<dbReference type="EvolutionaryTrace" id="Q8WWF6"/>
<dbReference type="GenomeRNAi" id="414061"/>
<dbReference type="Pharos" id="Q8WWF6">
    <property type="development level" value="Tdark"/>
</dbReference>
<dbReference type="PRO" id="PR:Q8WWF6"/>
<dbReference type="Proteomes" id="UP000005640">
    <property type="component" value="Unplaced"/>
</dbReference>
<dbReference type="RNAct" id="Q8WWF6">
    <property type="molecule type" value="protein"/>
</dbReference>
<dbReference type="GO" id="GO:0030544">
    <property type="term" value="F:Hsp70 protein binding"/>
    <property type="evidence" value="ECO:0007669"/>
    <property type="project" value="InterPro"/>
</dbReference>
<dbReference type="GO" id="GO:0051082">
    <property type="term" value="F:unfolded protein binding"/>
    <property type="evidence" value="ECO:0007669"/>
    <property type="project" value="InterPro"/>
</dbReference>
<dbReference type="GO" id="GO:0061077">
    <property type="term" value="P:chaperone-mediated protein folding"/>
    <property type="evidence" value="ECO:0007669"/>
    <property type="project" value="InterPro"/>
</dbReference>
<dbReference type="CDD" id="cd06257">
    <property type="entry name" value="DnaJ"/>
    <property type="match status" value="1"/>
</dbReference>
<dbReference type="FunFam" id="1.10.287.110:FF:000021">
    <property type="entry name" value="DnaJ (Hsp40) homolog, subfamily B, member 2"/>
    <property type="match status" value="1"/>
</dbReference>
<dbReference type="Gene3D" id="1.10.287.110">
    <property type="entry name" value="DnaJ domain"/>
    <property type="match status" value="1"/>
</dbReference>
<dbReference type="InterPro" id="IPR001623">
    <property type="entry name" value="DnaJ_domain"/>
</dbReference>
<dbReference type="InterPro" id="IPR018253">
    <property type="entry name" value="DnaJ_domain_CS"/>
</dbReference>
<dbReference type="InterPro" id="IPR043183">
    <property type="entry name" value="DNJB2/6-like"/>
</dbReference>
<dbReference type="InterPro" id="IPR036869">
    <property type="entry name" value="J_dom_sf"/>
</dbReference>
<dbReference type="PANTHER" id="PTHR45168">
    <property type="entry name" value="DNAJ HOMOLOG SUBFAMILY B MEMBER 2"/>
    <property type="match status" value="1"/>
</dbReference>
<dbReference type="PANTHER" id="PTHR45168:SF4">
    <property type="entry name" value="SIMILAR TO DNAJ HOMOLOG SUBFAMILY B MEMBER 6 (HEAT SHOCK PROTEIN J2) (HSJ-2) (MRJ) (MDJ4)"/>
    <property type="match status" value="1"/>
</dbReference>
<dbReference type="Pfam" id="PF00226">
    <property type="entry name" value="DnaJ"/>
    <property type="match status" value="1"/>
</dbReference>
<dbReference type="PRINTS" id="PR00625">
    <property type="entry name" value="JDOMAIN"/>
</dbReference>
<dbReference type="SMART" id="SM00271">
    <property type="entry name" value="DnaJ"/>
    <property type="match status" value="1"/>
</dbReference>
<dbReference type="SUPFAM" id="SSF46565">
    <property type="entry name" value="Chaperone J-domain"/>
    <property type="match status" value="1"/>
</dbReference>
<dbReference type="PROSITE" id="PS00636">
    <property type="entry name" value="DNAJ_1"/>
    <property type="match status" value="1"/>
</dbReference>
<dbReference type="PROSITE" id="PS50076">
    <property type="entry name" value="DNAJ_2"/>
    <property type="match status" value="1"/>
</dbReference>
<proteinExistence type="evidence at protein level"/>